<name>CAPZA_DICDI</name>
<reference key="1">
    <citation type="journal article" date="1989" name="J. Biol. Chem.">
        <title>Ca2+-independent F-actin capping proteins. Cap 32/34, a capping protein from Dictyostelium discoideum, does not share sequence homologies with known actin-binding proteins.</title>
        <authorList>
            <person name="Hartmann H."/>
            <person name="Noegel A.A."/>
            <person name="Eckerskorn C."/>
            <person name="Rapp S."/>
            <person name="Schleicher M."/>
        </authorList>
    </citation>
    <scope>NUCLEOTIDE SEQUENCE [GENOMIC DNA]</scope>
    <scope>PARTIAL PROTEIN SEQUENCE</scope>
</reference>
<reference key="2">
    <citation type="journal article" date="1990" name="Dev. Genet.">
        <title>Heterodimeric capping proteins constitute a highly conserved group of actin-binding proteins.</title>
        <authorList>
            <person name="Hartmann H."/>
            <person name="Schleicher M."/>
            <person name="Noegel A.A."/>
        </authorList>
    </citation>
    <scope>NUCLEOTIDE SEQUENCE [GENOMIC DNA]</scope>
</reference>
<reference key="3">
    <citation type="journal article" date="2002" name="Nature">
        <title>Sequence and analysis of chromosome 2 of Dictyostelium discoideum.</title>
        <authorList>
            <person name="Gloeckner G."/>
            <person name="Eichinger L."/>
            <person name="Szafranski K."/>
            <person name="Pachebat J.A."/>
            <person name="Bankier A.T."/>
            <person name="Dear P.H."/>
            <person name="Lehmann R."/>
            <person name="Baumgart C."/>
            <person name="Parra G."/>
            <person name="Abril J.F."/>
            <person name="Guigo R."/>
            <person name="Kumpf K."/>
            <person name="Tunggal B."/>
            <person name="Cox E.C."/>
            <person name="Quail M.A."/>
            <person name="Platzer M."/>
            <person name="Rosenthal A."/>
            <person name="Noegel A.A."/>
        </authorList>
    </citation>
    <scope>NUCLEOTIDE SEQUENCE [LARGE SCALE GENOMIC DNA]</scope>
    <source>
        <strain>AX4</strain>
    </source>
</reference>
<reference key="4">
    <citation type="journal article" date="2005" name="Nature">
        <title>The genome of the social amoeba Dictyostelium discoideum.</title>
        <authorList>
            <person name="Eichinger L."/>
            <person name="Pachebat J.A."/>
            <person name="Gloeckner G."/>
            <person name="Rajandream M.A."/>
            <person name="Sucgang R."/>
            <person name="Berriman M."/>
            <person name="Song J."/>
            <person name="Olsen R."/>
            <person name="Szafranski K."/>
            <person name="Xu Q."/>
            <person name="Tunggal B."/>
            <person name="Kummerfeld S."/>
            <person name="Madera M."/>
            <person name="Konfortov B.A."/>
            <person name="Rivero F."/>
            <person name="Bankier A.T."/>
            <person name="Lehmann R."/>
            <person name="Hamlin N."/>
            <person name="Davies R."/>
            <person name="Gaudet P."/>
            <person name="Fey P."/>
            <person name="Pilcher K."/>
            <person name="Chen G."/>
            <person name="Saunders D."/>
            <person name="Sodergren E.J."/>
            <person name="Davis P."/>
            <person name="Kerhornou A."/>
            <person name="Nie X."/>
            <person name="Hall N."/>
            <person name="Anjard C."/>
            <person name="Hemphill L."/>
            <person name="Bason N."/>
            <person name="Farbrother P."/>
            <person name="Desany B."/>
            <person name="Just E."/>
            <person name="Morio T."/>
            <person name="Rost R."/>
            <person name="Churcher C.M."/>
            <person name="Cooper J."/>
            <person name="Haydock S."/>
            <person name="van Driessche N."/>
            <person name="Cronin A."/>
            <person name="Goodhead I."/>
            <person name="Muzny D.M."/>
            <person name="Mourier T."/>
            <person name="Pain A."/>
            <person name="Lu M."/>
            <person name="Harper D."/>
            <person name="Lindsay R."/>
            <person name="Hauser H."/>
            <person name="James K.D."/>
            <person name="Quiles M."/>
            <person name="Madan Babu M."/>
            <person name="Saito T."/>
            <person name="Buchrieser C."/>
            <person name="Wardroper A."/>
            <person name="Felder M."/>
            <person name="Thangavelu M."/>
            <person name="Johnson D."/>
            <person name="Knights A."/>
            <person name="Loulseged H."/>
            <person name="Mungall K.L."/>
            <person name="Oliver K."/>
            <person name="Price C."/>
            <person name="Quail M.A."/>
            <person name="Urushihara H."/>
            <person name="Hernandez J."/>
            <person name="Rabbinowitsch E."/>
            <person name="Steffen D."/>
            <person name="Sanders M."/>
            <person name="Ma J."/>
            <person name="Kohara Y."/>
            <person name="Sharp S."/>
            <person name="Simmonds M.N."/>
            <person name="Spiegler S."/>
            <person name="Tivey A."/>
            <person name="Sugano S."/>
            <person name="White B."/>
            <person name="Walker D."/>
            <person name="Woodward J.R."/>
            <person name="Winckler T."/>
            <person name="Tanaka Y."/>
            <person name="Shaulsky G."/>
            <person name="Schleicher M."/>
            <person name="Weinstock G.M."/>
            <person name="Rosenthal A."/>
            <person name="Cox E.C."/>
            <person name="Chisholm R.L."/>
            <person name="Gibbs R.A."/>
            <person name="Loomis W.F."/>
            <person name="Platzer M."/>
            <person name="Kay R.R."/>
            <person name="Williams J.G."/>
            <person name="Dear P.H."/>
            <person name="Noegel A.A."/>
            <person name="Barrell B.G."/>
            <person name="Kuspa A."/>
        </authorList>
    </citation>
    <scope>NUCLEOTIDE SEQUENCE [LARGE SCALE GENOMIC DNA]</scope>
    <source>
        <strain>AX4</strain>
    </source>
</reference>
<reference key="5">
    <citation type="submission" date="2009-07" db="UniProtKB">
        <authorList>
            <person name="Bienvenut W.V."/>
            <person name="Ura S."/>
            <person name="Insall R.H."/>
        </authorList>
    </citation>
    <scope>PROTEIN SEQUENCE OF 32-49; 102-115 AND 209-226</scope>
    <scope>IDENTIFICATION BY MASS SPECTROMETRY</scope>
    <source>
        <strain>AX2</strain>
    </source>
</reference>
<reference key="6">
    <citation type="journal article" date="1996" name="Biochim. Biophys. Acta">
        <title>A major agonist-regulated capping activity in Dictyostelium is due to the capping protein, cap32/34.</title>
        <authorList>
            <person name="Eddy R.J."/>
            <person name="Han J."/>
            <person name="Sauterer R.A."/>
            <person name="Condeelis J.S."/>
        </authorList>
    </citation>
    <scope>FUNCTION</scope>
</reference>
<reference key="7">
    <citation type="journal article" date="2006" name="Eur. J. Cell Biol.">
        <title>Identification and isolation of Dictyostelium microtubule-associated protein interactors by tandem affinity purification.</title>
        <authorList>
            <person name="Koch K.V."/>
            <person name="Reinders Y."/>
            <person name="Ho T.-H."/>
            <person name="Sickmann A."/>
            <person name="Graef R."/>
        </authorList>
    </citation>
    <scope>IDENTIFICATION BY MASS SPECTROMETRY [LARGE SCALE ANALYSIS]</scope>
    <source>
        <strain>AX2</strain>
    </source>
</reference>
<proteinExistence type="evidence at protein level"/>
<gene>
    <name type="primary">acpB</name>
    <name type="synonym">abpD</name>
    <name type="ORF">DDB_G0272104</name>
</gene>
<comment type="function">
    <text evidence="2">F-actin-capping proteins bind in a Ca(2+)-independent manner to the fast growing ends of actin filaments (barbed end) thereby blocking the exchange of subunits at these ends. Unlike other capping proteins (such as gelsolin and severin), these proteins do not sever actin filaments.</text>
</comment>
<comment type="subunit">
    <text>Component of the F-actin capping complex, composed of a heterodimer of an alpha and a beta subunit.</text>
</comment>
<comment type="subcellular location">
    <subcellularLocation>
        <location evidence="1">Cytoplasm</location>
        <location evidence="1">Cytoskeleton</location>
    </subcellularLocation>
</comment>
<comment type="similarity">
    <text evidence="3">Belongs to the F-actin-capping protein alpha subunit family.</text>
</comment>
<protein>
    <recommendedName>
        <fullName>F-actin-capping protein subunit alpha</fullName>
    </recommendedName>
    <alternativeName>
        <fullName>Aginactin subunit alpha</fullName>
    </alternativeName>
    <alternativeName>
        <fullName>CAP34</fullName>
    </alternativeName>
</protein>
<organism>
    <name type="scientific">Dictyostelium discoideum</name>
    <name type="common">Social amoeba</name>
    <dbReference type="NCBI Taxonomy" id="44689"/>
    <lineage>
        <taxon>Eukaryota</taxon>
        <taxon>Amoebozoa</taxon>
        <taxon>Evosea</taxon>
        <taxon>Eumycetozoa</taxon>
        <taxon>Dictyostelia</taxon>
        <taxon>Dictyosteliales</taxon>
        <taxon>Dictyosteliaceae</taxon>
        <taxon>Dictyostelium</taxon>
    </lineage>
</organism>
<accession>P13022</accession>
<accession>Q559U1</accession>
<accession>Q75JU7</accession>
<keyword id="KW-0002">3D-structure</keyword>
<keyword id="KW-0117">Actin capping</keyword>
<keyword id="KW-0009">Actin-binding</keyword>
<keyword id="KW-0963">Cytoplasm</keyword>
<keyword id="KW-0206">Cytoskeleton</keyword>
<keyword id="KW-0903">Direct protein sequencing</keyword>
<keyword id="KW-1185">Reference proteome</keyword>
<dbReference type="EMBL" id="M25132">
    <property type="protein sequence ID" value="AAA33176.1"/>
    <property type="molecule type" value="Genomic_DNA"/>
</dbReference>
<dbReference type="EMBL" id="AAFI02000008">
    <property type="protein sequence ID" value="EAL71204.1"/>
    <property type="molecule type" value="Genomic_DNA"/>
</dbReference>
<dbReference type="PIR" id="B61042">
    <property type="entry name" value="B61042"/>
</dbReference>
<dbReference type="RefSeq" id="XP_645243.1">
    <property type="nucleotide sequence ID" value="XM_640151.1"/>
</dbReference>
<dbReference type="PDB" id="4AKR">
    <property type="method" value="X-ray"/>
    <property type="resolution" value="2.20 A"/>
    <property type="chains" value="A/C=1-281"/>
</dbReference>
<dbReference type="PDBsum" id="4AKR"/>
<dbReference type="SMR" id="P13022"/>
<dbReference type="FunCoup" id="P13022">
    <property type="interactions" value="770"/>
</dbReference>
<dbReference type="STRING" id="44689.P13022"/>
<dbReference type="PaxDb" id="44689-DDB0191243"/>
<dbReference type="EnsemblProtists" id="EAL71204">
    <property type="protein sequence ID" value="EAL71204"/>
    <property type="gene ID" value="DDB_G0272104"/>
</dbReference>
<dbReference type="GeneID" id="8618410"/>
<dbReference type="KEGG" id="ddi:DDB_G0272104"/>
<dbReference type="dictyBase" id="DDB_G0272104">
    <property type="gene designation" value="acpB"/>
</dbReference>
<dbReference type="VEuPathDB" id="AmoebaDB:DDB_G0272104"/>
<dbReference type="eggNOG" id="KOG0836">
    <property type="taxonomic scope" value="Eukaryota"/>
</dbReference>
<dbReference type="HOGENOM" id="CLU_045161_0_0_1"/>
<dbReference type="InParanoid" id="P13022"/>
<dbReference type="OMA" id="VACIEDH"/>
<dbReference type="PhylomeDB" id="P13022"/>
<dbReference type="Reactome" id="R-DDI-6807878">
    <property type="pathway name" value="COPI-mediated anterograde transport"/>
</dbReference>
<dbReference type="Reactome" id="R-DDI-983231">
    <property type="pathway name" value="Factors involved in megakaryocyte development and platelet production"/>
</dbReference>
<dbReference type="EvolutionaryTrace" id="P13022"/>
<dbReference type="PRO" id="PR:P13022"/>
<dbReference type="Proteomes" id="UP000002195">
    <property type="component" value="Chromosome 2"/>
</dbReference>
<dbReference type="GO" id="GO:0030864">
    <property type="term" value="C:cortical actin cytoskeleton"/>
    <property type="evidence" value="ECO:0000314"/>
    <property type="project" value="dictyBase"/>
</dbReference>
<dbReference type="GO" id="GO:0030863">
    <property type="term" value="C:cortical cytoskeleton"/>
    <property type="evidence" value="ECO:0000318"/>
    <property type="project" value="GO_Central"/>
</dbReference>
<dbReference type="GO" id="GO:0005829">
    <property type="term" value="C:cytosol"/>
    <property type="evidence" value="ECO:0000314"/>
    <property type="project" value="dictyBase"/>
</dbReference>
<dbReference type="GO" id="GO:0008290">
    <property type="term" value="C:F-actin capping protein complex"/>
    <property type="evidence" value="ECO:0000314"/>
    <property type="project" value="dictyBase"/>
</dbReference>
<dbReference type="GO" id="GO:0051015">
    <property type="term" value="F:actin filament binding"/>
    <property type="evidence" value="ECO:0000314"/>
    <property type="project" value="dictyBase"/>
</dbReference>
<dbReference type="GO" id="GO:0030036">
    <property type="term" value="P:actin cytoskeleton organization"/>
    <property type="evidence" value="ECO:0000318"/>
    <property type="project" value="GO_Central"/>
</dbReference>
<dbReference type="GO" id="GO:0051016">
    <property type="term" value="P:barbed-end actin filament capping"/>
    <property type="evidence" value="ECO:0000314"/>
    <property type="project" value="dictyBase"/>
</dbReference>
<dbReference type="GO" id="GO:0009617">
    <property type="term" value="P:response to bacterium"/>
    <property type="evidence" value="ECO:0007007"/>
    <property type="project" value="dictyBase"/>
</dbReference>
<dbReference type="FunFam" id="3.30.1140.60:FF:000014">
    <property type="entry name" value="F-actin-capping protein subunit alpha"/>
    <property type="match status" value="1"/>
</dbReference>
<dbReference type="FunFam" id="3.90.1150.210:FF:000003">
    <property type="entry name" value="F-actin-capping protein subunit alpha"/>
    <property type="match status" value="1"/>
</dbReference>
<dbReference type="Gene3D" id="3.30.1140.60">
    <property type="entry name" value="F-actin capping protein, alpha subunit"/>
    <property type="match status" value="1"/>
</dbReference>
<dbReference type="Gene3D" id="3.90.1150.210">
    <property type="entry name" value="F-actin capping protein, beta subunit"/>
    <property type="match status" value="1"/>
</dbReference>
<dbReference type="InterPro" id="IPR002189">
    <property type="entry name" value="CapZ_alpha"/>
</dbReference>
<dbReference type="InterPro" id="IPR037282">
    <property type="entry name" value="CapZ_alpha/beta"/>
</dbReference>
<dbReference type="InterPro" id="IPR042276">
    <property type="entry name" value="CapZ_alpha/beta_2"/>
</dbReference>
<dbReference type="InterPro" id="IPR042489">
    <property type="entry name" value="CapZ_alpha_1"/>
</dbReference>
<dbReference type="InterPro" id="IPR017865">
    <property type="entry name" value="F-actin_cap_asu_CS"/>
</dbReference>
<dbReference type="PANTHER" id="PTHR10653">
    <property type="entry name" value="F-ACTIN-CAPPING PROTEIN SUBUNIT ALPHA"/>
    <property type="match status" value="1"/>
</dbReference>
<dbReference type="PANTHER" id="PTHR10653:SF0">
    <property type="entry name" value="F-ACTIN-CAPPING PROTEIN SUBUNIT ALPHA"/>
    <property type="match status" value="1"/>
</dbReference>
<dbReference type="Pfam" id="PF01267">
    <property type="entry name" value="F-actin_cap_A"/>
    <property type="match status" value="1"/>
</dbReference>
<dbReference type="PRINTS" id="PR00191">
    <property type="entry name" value="FACTINCAPA"/>
</dbReference>
<dbReference type="SUPFAM" id="SSF90096">
    <property type="entry name" value="Subunits of heterodimeric actin filament capping protein Capz"/>
    <property type="match status" value="1"/>
</dbReference>
<dbReference type="PROSITE" id="PS00748">
    <property type="entry name" value="F_ACTIN_CAPPING_A_1"/>
    <property type="match status" value="1"/>
</dbReference>
<dbReference type="PROSITE" id="PS00749">
    <property type="entry name" value="F_ACTIN_CAPPING_A_2"/>
    <property type="match status" value="1"/>
</dbReference>
<feature type="chain" id="PRO_0000208638" description="F-actin-capping protein subunit alpha">
    <location>
        <begin position="1"/>
        <end position="281"/>
    </location>
</feature>
<feature type="helix" evidence="4">
    <location>
        <begin position="4"/>
        <end position="16"/>
    </location>
</feature>
<feature type="helix" evidence="4">
    <location>
        <begin position="23"/>
        <end position="31"/>
    </location>
</feature>
<feature type="turn" evidence="4">
    <location>
        <begin position="37"/>
        <end position="43"/>
    </location>
</feature>
<feature type="helix" evidence="4">
    <location>
        <begin position="44"/>
        <end position="55"/>
    </location>
</feature>
<feature type="strand" evidence="4">
    <location>
        <begin position="58"/>
        <end position="61"/>
    </location>
</feature>
<feature type="strand" evidence="4">
    <location>
        <begin position="64"/>
        <end position="67"/>
    </location>
</feature>
<feature type="strand" evidence="4">
    <location>
        <begin position="73"/>
        <end position="75"/>
    </location>
</feature>
<feature type="strand" evidence="4">
    <location>
        <begin position="78"/>
        <end position="81"/>
    </location>
</feature>
<feature type="helix" evidence="4">
    <location>
        <begin position="82"/>
        <end position="84"/>
    </location>
</feature>
<feature type="strand" evidence="4">
    <location>
        <begin position="86"/>
        <end position="91"/>
    </location>
</feature>
<feature type="turn" evidence="4">
    <location>
        <begin position="92"/>
        <end position="95"/>
    </location>
</feature>
<feature type="strand" evidence="4">
    <location>
        <begin position="96"/>
        <end position="102"/>
    </location>
</feature>
<feature type="helix" evidence="4">
    <location>
        <begin position="109"/>
        <end position="111"/>
    </location>
</feature>
<feature type="helix" evidence="4">
    <location>
        <begin position="112"/>
        <end position="129"/>
    </location>
</feature>
<feature type="strand" evidence="4">
    <location>
        <begin position="134"/>
        <end position="142"/>
    </location>
</feature>
<feature type="strand" evidence="4">
    <location>
        <begin position="145"/>
        <end position="158"/>
    </location>
</feature>
<feature type="helix" evidence="4">
    <location>
        <begin position="159"/>
        <end position="161"/>
    </location>
</feature>
<feature type="strand" evidence="4">
    <location>
        <begin position="163"/>
        <end position="175"/>
    </location>
</feature>
<feature type="strand" evidence="4">
    <location>
        <begin position="179"/>
        <end position="194"/>
    </location>
</feature>
<feature type="strand" evidence="4">
    <location>
        <begin position="196"/>
        <end position="213"/>
    </location>
</feature>
<feature type="helix" evidence="4">
    <location>
        <begin position="217"/>
        <end position="248"/>
    </location>
</feature>
<feature type="turn" evidence="4">
    <location>
        <begin position="249"/>
        <end position="254"/>
    </location>
</feature>
<evidence type="ECO:0000250" key="1">
    <source>
        <dbReference type="UniProtKB" id="A0PFK5"/>
    </source>
</evidence>
<evidence type="ECO:0000269" key="2">
    <source>
    </source>
</evidence>
<evidence type="ECO:0000305" key="3"/>
<evidence type="ECO:0007829" key="4">
    <source>
        <dbReference type="PDB" id="4AKR"/>
    </source>
</evidence>
<sequence length="281" mass="31163">MASNQELVQIATNFLLNAPPCEFMEVVSDVRALLPSESLLNASAGSTFREYNTSQMVSVQTSKGSALITKEGEISNNEYLDPKNKQVITYDHIKQEVTGERSASGEIEQDIEQYRAAFDEEATKYCNEYYPNGVSAVYGTKVSEGIKITVCISTCIYKPNAFYSGRWRSVWTCTFKPGSGNVTSNGKVQVNVHYFEDGNVQLNTVTQKQTTSPSADAQSTAVNAFKAIGKAELNLHTALDNNYSTMGDTTFKALRRALPINRTKINWQKVKNFKIANELNK</sequence>